<evidence type="ECO:0000305" key="1"/>
<protein>
    <recommendedName>
        <fullName>Serotype 3 fimbrial subunit</fullName>
    </recommendedName>
</protein>
<reference key="1">
    <citation type="journal article" date="1990" name="FEMS Microbiol. Lett.">
        <title>Structure of the Bordetella pertussis gene coding for the serotype 3 fimbrial subunit.</title>
        <authorList>
            <person name="Mooi F.R."/>
            <person name="Ter Avest A."/>
            <person name="van der Heide H.G.J."/>
        </authorList>
    </citation>
    <scope>NUCLEOTIDE SEQUENCE [GENOMIC DNA]</scope>
    <source>
        <strain>Johama / Serotype 3</strain>
    </source>
</reference>
<reference key="2">
    <citation type="journal article" date="2003" name="Nat. Genet.">
        <title>Comparative analysis of the genome sequences of Bordetella pertussis, Bordetella parapertussis and Bordetella bronchiseptica.</title>
        <authorList>
            <person name="Parkhill J."/>
            <person name="Sebaihia M."/>
            <person name="Preston A."/>
            <person name="Murphy L.D."/>
            <person name="Thomson N.R."/>
            <person name="Harris D.E."/>
            <person name="Holden M.T.G."/>
            <person name="Churcher C.M."/>
            <person name="Bentley S.D."/>
            <person name="Mungall K.L."/>
            <person name="Cerdeno-Tarraga A.-M."/>
            <person name="Temple L."/>
            <person name="James K.D."/>
            <person name="Harris B."/>
            <person name="Quail M.A."/>
            <person name="Achtman M."/>
            <person name="Atkin R."/>
            <person name="Baker S."/>
            <person name="Basham D."/>
            <person name="Bason N."/>
            <person name="Cherevach I."/>
            <person name="Chillingworth T."/>
            <person name="Collins M."/>
            <person name="Cronin A."/>
            <person name="Davis P."/>
            <person name="Doggett J."/>
            <person name="Feltwell T."/>
            <person name="Goble A."/>
            <person name="Hamlin N."/>
            <person name="Hauser H."/>
            <person name="Holroyd S."/>
            <person name="Jagels K."/>
            <person name="Leather S."/>
            <person name="Moule S."/>
            <person name="Norberczak H."/>
            <person name="O'Neil S."/>
            <person name="Ormond D."/>
            <person name="Price C."/>
            <person name="Rabbinowitsch E."/>
            <person name="Rutter S."/>
            <person name="Sanders M."/>
            <person name="Saunders D."/>
            <person name="Seeger K."/>
            <person name="Sharp S."/>
            <person name="Simmonds M."/>
            <person name="Skelton J."/>
            <person name="Squares R."/>
            <person name="Squares S."/>
            <person name="Stevens K."/>
            <person name="Unwin L."/>
            <person name="Whitehead S."/>
            <person name="Barrell B.G."/>
            <person name="Maskell D.J."/>
        </authorList>
    </citation>
    <scope>NUCLEOTIDE SEQUENCE [LARGE SCALE GENOMIC DNA]</scope>
    <source>
        <strain>Tohama I / ATCC BAA-589 / NCTC 13251</strain>
    </source>
</reference>
<organism>
    <name type="scientific">Bordetella pertussis (strain Tohama I / ATCC BAA-589 / NCTC 13251)</name>
    <dbReference type="NCBI Taxonomy" id="257313"/>
    <lineage>
        <taxon>Bacteria</taxon>
        <taxon>Pseudomonadati</taxon>
        <taxon>Pseudomonadota</taxon>
        <taxon>Betaproteobacteria</taxon>
        <taxon>Burkholderiales</taxon>
        <taxon>Alcaligenaceae</taxon>
        <taxon>Bordetella</taxon>
    </lineage>
</organism>
<comment type="function">
    <text>Bordetella pertussis is the causative agent of whooping cough. An essential step in the disease process is the attachment of the bacteria to the ciliated epithelium of the respiratory tract, enabling the organism to resist normal host-clearance mechanisms. It is unclear which bacterial cell surface component are responsible for adherence but the fimbriae of B.pertussis are prime candidates for being involved in this process.</text>
</comment>
<comment type="subcellular location">
    <subcellularLocation>
        <location>Fimbrium</location>
    </subcellularLocation>
    <text>Pili structure on the cell surface.</text>
</comment>
<comment type="similarity">
    <text evidence="1">Belongs to the fimbrial protein family.</text>
</comment>
<sequence>MSKFSYPALRAALILAASPVLPALANDGTIVITGSISDQTCVIEEPSTLNHIKVVQLPKISKNALRNDGDTAGATPFDIKLKECPQALGALKLYFEPGITTNYDTGDLIAYKQTYNASGNGNLSTVSSATKAKGVEFRLANLNGQHIRMGTDKTTQAAQTFTGKVTNGSKSYTLRYLASYVKKPKEDVDAAQITSYVGFSVVYP</sequence>
<proteinExistence type="inferred from homology"/>
<keyword id="KW-1015">Disulfide bond</keyword>
<keyword id="KW-0281">Fimbrium</keyword>
<keyword id="KW-1185">Reference proteome</keyword>
<keyword id="KW-0732">Signal</keyword>
<dbReference type="EMBL" id="X51543">
    <property type="protein sequence ID" value="CAA35920.1"/>
    <property type="molecule type" value="Genomic_DNA"/>
</dbReference>
<dbReference type="EMBL" id="BX640415">
    <property type="protein sequence ID" value="CAE41857.1"/>
    <property type="molecule type" value="Genomic_DNA"/>
</dbReference>
<dbReference type="PIR" id="S10882">
    <property type="entry name" value="S10882"/>
</dbReference>
<dbReference type="PIR" id="S12578">
    <property type="entry name" value="S12578"/>
</dbReference>
<dbReference type="RefSeq" id="NP_880302.1">
    <property type="nucleotide sequence ID" value="NC_002929.2"/>
</dbReference>
<dbReference type="RefSeq" id="WP_010930436.1">
    <property type="nucleotide sequence ID" value="NZ_CP039022.1"/>
</dbReference>
<dbReference type="SMR" id="P17835"/>
<dbReference type="STRING" id="257313.BP1568"/>
<dbReference type="PaxDb" id="257313-BP1568"/>
<dbReference type="KEGG" id="bpe:BP1568"/>
<dbReference type="PATRIC" id="fig|257313.5.peg.1683"/>
<dbReference type="eggNOG" id="COG3539">
    <property type="taxonomic scope" value="Bacteria"/>
</dbReference>
<dbReference type="HOGENOM" id="CLU_088965_2_0_4"/>
<dbReference type="Proteomes" id="UP000002676">
    <property type="component" value="Chromosome"/>
</dbReference>
<dbReference type="GO" id="GO:0009289">
    <property type="term" value="C:pilus"/>
    <property type="evidence" value="ECO:0007669"/>
    <property type="project" value="UniProtKB-SubCell"/>
</dbReference>
<dbReference type="GO" id="GO:0043709">
    <property type="term" value="P:cell adhesion involved in single-species biofilm formation"/>
    <property type="evidence" value="ECO:0007669"/>
    <property type="project" value="TreeGrafter"/>
</dbReference>
<dbReference type="Gene3D" id="2.60.40.1090">
    <property type="entry name" value="Fimbrial-type adhesion domain"/>
    <property type="match status" value="1"/>
</dbReference>
<dbReference type="InterPro" id="IPR036937">
    <property type="entry name" value="Adhesion_dom_fimbrial_sf"/>
</dbReference>
<dbReference type="InterPro" id="IPR008966">
    <property type="entry name" value="Adhesion_dom_sf"/>
</dbReference>
<dbReference type="InterPro" id="IPR050263">
    <property type="entry name" value="Bact_Fimbrial_Adh_Pro"/>
</dbReference>
<dbReference type="InterPro" id="IPR039458">
    <property type="entry name" value="FimA-like"/>
</dbReference>
<dbReference type="PANTHER" id="PTHR33420:SF3">
    <property type="entry name" value="FIMBRIAL SUBUNIT ELFA"/>
    <property type="match status" value="1"/>
</dbReference>
<dbReference type="PANTHER" id="PTHR33420">
    <property type="entry name" value="FIMBRIAL SUBUNIT ELFA-RELATED"/>
    <property type="match status" value="1"/>
</dbReference>
<dbReference type="Pfam" id="PF16970">
    <property type="entry name" value="FimA"/>
    <property type="match status" value="1"/>
</dbReference>
<dbReference type="SUPFAM" id="SSF49401">
    <property type="entry name" value="Bacterial adhesins"/>
    <property type="match status" value="1"/>
</dbReference>
<gene>
    <name type="primary">fim3</name>
    <name type="ordered locus">BP1568</name>
</gene>
<feature type="signal peptide">
    <location>
        <begin position="1"/>
        <end position="25"/>
    </location>
</feature>
<feature type="chain" id="PRO_0000009152" description="Serotype 3 fimbrial subunit">
    <location>
        <begin position="26"/>
        <end position="204"/>
    </location>
</feature>
<feature type="disulfide bond" evidence="1">
    <location>
        <begin position="41"/>
        <end position="84"/>
    </location>
</feature>
<accession>P17835</accession>
<name>FM3_BORPE</name>